<sequence>MIDRYKHQQLRIGLVSPQQISAWATKIIPNGEIVGEVTKPYTFHYKTNKPEKDGLFCERIFGPIKSGICACGNYRVIGDEKEDPKFCEQCGVEFVDSRIRRYQMGYIKLTCPVTHVWYLKRLPSYIANLLDKPLKELEGLVYCDFSFARPITKKPTFLRLRGSFEYEIQSWKYSIPLFFTTQGFDIFRNREISTGAGAIREQLADLDLRIIIENSLVEWKQLGEEGPTGNEWEDRKIVRRKDFLVRRMELAKHFIRTNIEPEWMVLCLLPVLPPELRPIIQIEGGKLMSSDINELYRRVIYRNNTLTDLLTTSRSTPGELVMCQEKLVQEAVDTLLDNGIRGQPMRDGHNKVYKSFSDVIEGKEGRFRETLLGKRVDYSGRSVIVVGPSLSLHRCGLPREIAIELFQTFVIRGLIRQHLASNIGVAKSQIREKKPIVWEILQEVMQGHPVLLNRAPTLHRLGIQSFQPILVEGRTICLHPLVCKGFNADFDGDQMAVHVPLSLEAQAEARLLMFSHMNLLSPAIGDPISVPTQDMLIGLYVLTSGTRRGICANRYNPCNRKNYQNERIYETNYKYTKEPFFCNSYDAIGAYRQKKINLDSPLWLRWQLDQRVIASREVPIEVHYESFGNYHEIYAHYLIVRSVKKENFCIYIRTTVGHISFYREIEEAIQGFSQACSYDT</sequence>
<feature type="chain" id="PRO_0000067861" description="DNA-directed RNA polymerase subunit beta'">
    <location>
        <begin position="1"/>
        <end position="680"/>
    </location>
</feature>
<feature type="binding site" evidence="1">
    <location>
        <position position="69"/>
    </location>
    <ligand>
        <name>Zn(2+)</name>
        <dbReference type="ChEBI" id="CHEBI:29105"/>
    </ligand>
</feature>
<feature type="binding site" evidence="1">
    <location>
        <position position="71"/>
    </location>
    <ligand>
        <name>Zn(2+)</name>
        <dbReference type="ChEBI" id="CHEBI:29105"/>
    </ligand>
</feature>
<feature type="binding site" evidence="1">
    <location>
        <position position="87"/>
    </location>
    <ligand>
        <name>Zn(2+)</name>
        <dbReference type="ChEBI" id="CHEBI:29105"/>
    </ligand>
</feature>
<feature type="binding site" evidence="1">
    <location>
        <position position="90"/>
    </location>
    <ligand>
        <name>Zn(2+)</name>
        <dbReference type="ChEBI" id="CHEBI:29105"/>
    </ligand>
</feature>
<feature type="binding site" evidence="1">
    <location>
        <position position="489"/>
    </location>
    <ligand>
        <name>Mg(2+)</name>
        <dbReference type="ChEBI" id="CHEBI:18420"/>
    </ligand>
</feature>
<feature type="binding site" evidence="1">
    <location>
        <position position="491"/>
    </location>
    <ligand>
        <name>Mg(2+)</name>
        <dbReference type="ChEBI" id="CHEBI:18420"/>
    </ligand>
</feature>
<feature type="binding site" evidence="1">
    <location>
        <position position="493"/>
    </location>
    <ligand>
        <name>Mg(2+)</name>
        <dbReference type="ChEBI" id="CHEBI:18420"/>
    </ligand>
</feature>
<keyword id="KW-0150">Chloroplast</keyword>
<keyword id="KW-0240">DNA-directed RNA polymerase</keyword>
<keyword id="KW-0460">Magnesium</keyword>
<keyword id="KW-0479">Metal-binding</keyword>
<keyword id="KW-0548">Nucleotidyltransferase</keyword>
<keyword id="KW-0934">Plastid</keyword>
<keyword id="KW-1185">Reference proteome</keyword>
<keyword id="KW-0804">Transcription</keyword>
<keyword id="KW-0808">Transferase</keyword>
<keyword id="KW-0862">Zinc</keyword>
<accession>P56763</accession>
<comment type="function">
    <text evidence="1">DNA-dependent RNA polymerase catalyzes the transcription of DNA into RNA using the four ribonucleoside triphosphates as substrates.</text>
</comment>
<comment type="catalytic activity">
    <reaction evidence="1">
        <text>RNA(n) + a ribonucleoside 5'-triphosphate = RNA(n+1) + diphosphate</text>
        <dbReference type="Rhea" id="RHEA:21248"/>
        <dbReference type="Rhea" id="RHEA-COMP:14527"/>
        <dbReference type="Rhea" id="RHEA-COMP:17342"/>
        <dbReference type="ChEBI" id="CHEBI:33019"/>
        <dbReference type="ChEBI" id="CHEBI:61557"/>
        <dbReference type="ChEBI" id="CHEBI:140395"/>
        <dbReference type="EC" id="2.7.7.6"/>
    </reaction>
</comment>
<comment type="cofactor">
    <cofactor evidence="1">
        <name>Mg(2+)</name>
        <dbReference type="ChEBI" id="CHEBI:18420"/>
    </cofactor>
    <text evidence="1">Binds 1 Mg(2+) ion per subunit.</text>
</comment>
<comment type="cofactor">
    <cofactor evidence="1">
        <name>Zn(2+)</name>
        <dbReference type="ChEBI" id="CHEBI:29105"/>
    </cofactor>
    <text evidence="1">Binds 1 Zn(2+) ion per subunit.</text>
</comment>
<comment type="subunit">
    <text evidence="1">In plastids the minimal PEP RNA polymerase catalytic core is composed of four subunits: alpha, beta, beta', and beta''. When a (nuclear-encoded) sigma factor is associated with the core the holoenzyme is formed, which can initiate transcription.</text>
</comment>
<comment type="subcellular location">
    <subcellularLocation>
        <location evidence="1">Plastid</location>
        <location evidence="1">Chloroplast</location>
    </subcellularLocation>
</comment>
<comment type="similarity">
    <text evidence="1">Belongs to the RNA polymerase beta' chain family. RpoC1 subfamily.</text>
</comment>
<reference key="1">
    <citation type="journal article" date="1999" name="DNA Res.">
        <title>Complete structure of the chloroplast genome of Arabidopsis thaliana.</title>
        <authorList>
            <person name="Sato S."/>
            <person name="Nakamura Y."/>
            <person name="Kaneko T."/>
            <person name="Asamizu E."/>
            <person name="Tabata S."/>
        </authorList>
    </citation>
    <scope>NUCLEOTIDE SEQUENCE [LARGE SCALE GENOMIC DNA]</scope>
    <source>
        <strain>cv. Columbia</strain>
    </source>
</reference>
<evidence type="ECO:0000255" key="1">
    <source>
        <dbReference type="HAMAP-Rule" id="MF_01323"/>
    </source>
</evidence>
<geneLocation type="chloroplast"/>
<dbReference type="EC" id="2.7.7.6" evidence="1"/>
<dbReference type="EMBL" id="AP000423">
    <property type="protein sequence ID" value="BAA84376.1"/>
    <property type="molecule type" value="Genomic_DNA"/>
</dbReference>
<dbReference type="RefSeq" id="NP_051050.1">
    <property type="nucleotide sequence ID" value="NC_000932.1"/>
</dbReference>
<dbReference type="SMR" id="P56763"/>
<dbReference type="BioGRID" id="29978">
    <property type="interactions" value="4"/>
</dbReference>
<dbReference type="FunCoup" id="P56763">
    <property type="interactions" value="74"/>
</dbReference>
<dbReference type="IntAct" id="P56763">
    <property type="interactions" value="2"/>
</dbReference>
<dbReference type="MINT" id="P56763"/>
<dbReference type="STRING" id="3702.P56763"/>
<dbReference type="PaxDb" id="3702-ATCG00180.1"/>
<dbReference type="ProteomicsDB" id="226510"/>
<dbReference type="EnsemblPlants" id="ATCG00180.1">
    <property type="protein sequence ID" value="ATCG00180.1"/>
    <property type="gene ID" value="ATCG00180"/>
</dbReference>
<dbReference type="GeneID" id="844784"/>
<dbReference type="Gramene" id="ATCG00180.1">
    <property type="protein sequence ID" value="ATCG00180.1"/>
    <property type="gene ID" value="ATCG00180"/>
</dbReference>
<dbReference type="KEGG" id="ath:ArthCp013"/>
<dbReference type="Araport" id="ATCG00180"/>
<dbReference type="TAIR" id="ATCG00180">
    <property type="gene designation" value="RPOC1"/>
</dbReference>
<dbReference type="eggNOG" id="ENOG502QPYA">
    <property type="taxonomic scope" value="Eukaryota"/>
</dbReference>
<dbReference type="HOGENOM" id="CLU_030022_2_0_1"/>
<dbReference type="InParanoid" id="P56763"/>
<dbReference type="OMA" id="WGERTLP"/>
<dbReference type="PRO" id="PR:P56763"/>
<dbReference type="Proteomes" id="UP000006548">
    <property type="component" value="Chloroplast Pltd"/>
</dbReference>
<dbReference type="ExpressionAtlas" id="P56763">
    <property type="expression patterns" value="baseline and differential"/>
</dbReference>
<dbReference type="GO" id="GO:0009507">
    <property type="term" value="C:chloroplast"/>
    <property type="evidence" value="ECO:0007005"/>
    <property type="project" value="TAIR"/>
</dbReference>
<dbReference type="GO" id="GO:0042644">
    <property type="term" value="C:chloroplast nucleoid"/>
    <property type="evidence" value="ECO:0007005"/>
    <property type="project" value="TAIR"/>
</dbReference>
<dbReference type="GO" id="GO:0000428">
    <property type="term" value="C:DNA-directed RNA polymerase complex"/>
    <property type="evidence" value="ECO:0007669"/>
    <property type="project" value="UniProtKB-KW"/>
</dbReference>
<dbReference type="GO" id="GO:0005739">
    <property type="term" value="C:mitochondrion"/>
    <property type="evidence" value="ECO:0007669"/>
    <property type="project" value="GOC"/>
</dbReference>
<dbReference type="GO" id="GO:0003677">
    <property type="term" value="F:DNA binding"/>
    <property type="evidence" value="ECO:0007669"/>
    <property type="project" value="UniProtKB-UniRule"/>
</dbReference>
<dbReference type="GO" id="GO:0003899">
    <property type="term" value="F:DNA-directed RNA polymerase activity"/>
    <property type="evidence" value="ECO:0007669"/>
    <property type="project" value="UniProtKB-UniRule"/>
</dbReference>
<dbReference type="GO" id="GO:0000287">
    <property type="term" value="F:magnesium ion binding"/>
    <property type="evidence" value="ECO:0007669"/>
    <property type="project" value="UniProtKB-UniRule"/>
</dbReference>
<dbReference type="GO" id="GO:0003729">
    <property type="term" value="F:mRNA binding"/>
    <property type="evidence" value="ECO:0000314"/>
    <property type="project" value="TAIR"/>
</dbReference>
<dbReference type="GO" id="GO:0008270">
    <property type="term" value="F:zinc ion binding"/>
    <property type="evidence" value="ECO:0007669"/>
    <property type="project" value="UniProtKB-UniRule"/>
</dbReference>
<dbReference type="GO" id="GO:0006351">
    <property type="term" value="P:DNA-templated transcription"/>
    <property type="evidence" value="ECO:0007669"/>
    <property type="project" value="UniProtKB-UniRule"/>
</dbReference>
<dbReference type="FunFam" id="1.10.40.90:FF:000002">
    <property type="entry name" value="DNA-directed RNA polymerase subunit"/>
    <property type="match status" value="1"/>
</dbReference>
<dbReference type="FunFam" id="4.10.860.120:FF:000007">
    <property type="entry name" value="DNA-directed RNA polymerase subunit gamma"/>
    <property type="match status" value="1"/>
</dbReference>
<dbReference type="Gene3D" id="1.10.40.90">
    <property type="match status" value="1"/>
</dbReference>
<dbReference type="Gene3D" id="2.40.40.20">
    <property type="match status" value="1"/>
</dbReference>
<dbReference type="Gene3D" id="4.10.860.120">
    <property type="entry name" value="RNA polymerase II, clamp domain"/>
    <property type="match status" value="1"/>
</dbReference>
<dbReference type="Gene3D" id="1.10.274.100">
    <property type="entry name" value="RNA polymerase Rpb1, domain 3"/>
    <property type="match status" value="1"/>
</dbReference>
<dbReference type="HAMAP" id="MF_01323">
    <property type="entry name" value="RNApol_bact_RpoC1"/>
    <property type="match status" value="1"/>
</dbReference>
<dbReference type="InterPro" id="IPR045867">
    <property type="entry name" value="DNA-dir_RpoC_beta_prime"/>
</dbReference>
<dbReference type="InterPro" id="IPR000722">
    <property type="entry name" value="RNA_pol_asu"/>
</dbReference>
<dbReference type="InterPro" id="IPR006592">
    <property type="entry name" value="RNA_pol_N"/>
</dbReference>
<dbReference type="InterPro" id="IPR007080">
    <property type="entry name" value="RNA_pol_Rpb1_1"/>
</dbReference>
<dbReference type="InterPro" id="IPR042102">
    <property type="entry name" value="RNA_pol_Rpb1_3_sf"/>
</dbReference>
<dbReference type="InterPro" id="IPR044893">
    <property type="entry name" value="RNA_pol_Rpb1_clamp_domain"/>
</dbReference>
<dbReference type="InterPro" id="IPR034678">
    <property type="entry name" value="RNApol_RpoC1"/>
</dbReference>
<dbReference type="PANTHER" id="PTHR19376">
    <property type="entry name" value="DNA-DIRECTED RNA POLYMERASE"/>
    <property type="match status" value="1"/>
</dbReference>
<dbReference type="PANTHER" id="PTHR19376:SF54">
    <property type="entry name" value="DNA-DIRECTED RNA POLYMERASE SUBUNIT BETA"/>
    <property type="match status" value="1"/>
</dbReference>
<dbReference type="Pfam" id="PF04997">
    <property type="entry name" value="RNA_pol_Rpb1_1"/>
    <property type="match status" value="1"/>
</dbReference>
<dbReference type="Pfam" id="PF00623">
    <property type="entry name" value="RNA_pol_Rpb1_2"/>
    <property type="match status" value="2"/>
</dbReference>
<dbReference type="SMART" id="SM00663">
    <property type="entry name" value="RPOLA_N"/>
    <property type="match status" value="1"/>
</dbReference>
<dbReference type="SUPFAM" id="SSF64484">
    <property type="entry name" value="beta and beta-prime subunits of DNA dependent RNA-polymerase"/>
    <property type="match status" value="1"/>
</dbReference>
<proteinExistence type="inferred from homology"/>
<gene>
    <name evidence="1" type="primary">rpoC1</name>
    <name type="ordered locus">AtCg00180</name>
</gene>
<organism>
    <name type="scientific">Arabidopsis thaliana</name>
    <name type="common">Mouse-ear cress</name>
    <dbReference type="NCBI Taxonomy" id="3702"/>
    <lineage>
        <taxon>Eukaryota</taxon>
        <taxon>Viridiplantae</taxon>
        <taxon>Streptophyta</taxon>
        <taxon>Embryophyta</taxon>
        <taxon>Tracheophyta</taxon>
        <taxon>Spermatophyta</taxon>
        <taxon>Magnoliopsida</taxon>
        <taxon>eudicotyledons</taxon>
        <taxon>Gunneridae</taxon>
        <taxon>Pentapetalae</taxon>
        <taxon>rosids</taxon>
        <taxon>malvids</taxon>
        <taxon>Brassicales</taxon>
        <taxon>Brassicaceae</taxon>
        <taxon>Camelineae</taxon>
        <taxon>Arabidopsis</taxon>
    </lineage>
</organism>
<protein>
    <recommendedName>
        <fullName evidence="1">DNA-directed RNA polymerase subunit beta'</fullName>
        <ecNumber evidence="1">2.7.7.6</ecNumber>
    </recommendedName>
    <alternativeName>
        <fullName evidence="1">PEP</fullName>
    </alternativeName>
    <alternativeName>
        <fullName evidence="1">Plastid-encoded RNA polymerase subunit beta'</fullName>
        <shortName evidence="1">RNA polymerase subunit beta'</shortName>
    </alternativeName>
</protein>
<name>RPOC1_ARATH</name>